<reference key="1">
    <citation type="submission" date="2000-02" db="EMBL/GenBank/DDBJ databases">
        <title>Long branches in the seed plants and the root of the angiosperms.</title>
        <authorList>
            <person name="Graham S.W."/>
            <person name="Reeves P.A."/>
            <person name="Burns A."/>
            <person name="Olmstead R.G."/>
        </authorList>
    </citation>
    <scope>NUCLEOTIDE SEQUENCE [GENOMIC DNA]</scope>
</reference>
<geneLocation type="chloroplast"/>
<proteinExistence type="inferred from homology"/>
<accession>Q7HIU5</accession>
<name>PSBL_MAGST</name>
<feature type="chain" id="PRO_0000219737" description="Photosystem II reaction center protein L">
    <location>
        <begin position="1"/>
        <end position="38"/>
    </location>
</feature>
<feature type="transmembrane region" description="Helical" evidence="1">
    <location>
        <begin position="17"/>
        <end position="37"/>
    </location>
</feature>
<protein>
    <recommendedName>
        <fullName evidence="1">Photosystem II reaction center protein L</fullName>
        <shortName evidence="1">PSII-L</shortName>
    </recommendedName>
</protein>
<gene>
    <name evidence="1" type="primary">psbL</name>
</gene>
<keyword id="KW-0150">Chloroplast</keyword>
<keyword id="KW-0472">Membrane</keyword>
<keyword id="KW-0602">Photosynthesis</keyword>
<keyword id="KW-0604">Photosystem II</keyword>
<keyword id="KW-0934">Plastid</keyword>
<keyword id="KW-0674">Reaction center</keyword>
<keyword id="KW-0793">Thylakoid</keyword>
<keyword id="KW-0812">Transmembrane</keyword>
<keyword id="KW-1133">Transmembrane helix</keyword>
<organism>
    <name type="scientific">Magnolia stellata</name>
    <name type="common">Star magnolia</name>
    <name type="synonym">Buergeria stellata</name>
    <dbReference type="NCBI Taxonomy" id="54733"/>
    <lineage>
        <taxon>Eukaryota</taxon>
        <taxon>Viridiplantae</taxon>
        <taxon>Streptophyta</taxon>
        <taxon>Embryophyta</taxon>
        <taxon>Tracheophyta</taxon>
        <taxon>Spermatophyta</taxon>
        <taxon>Magnoliopsida</taxon>
        <taxon>Magnoliidae</taxon>
        <taxon>Magnoliales</taxon>
        <taxon>Magnoliaceae</taxon>
        <taxon>Magnolia</taxon>
    </lineage>
</organism>
<evidence type="ECO:0000255" key="1">
    <source>
        <dbReference type="HAMAP-Rule" id="MF_01317"/>
    </source>
</evidence>
<comment type="function">
    <text evidence="1">One of the components of the core complex of photosystem II (PSII). PSII is a light-driven water:plastoquinone oxidoreductase that uses light energy to abstract electrons from H(2)O, generating O(2) and a proton gradient subsequently used for ATP formation. It consists of a core antenna complex that captures photons, and an electron transfer chain that converts photonic excitation into a charge separation. This subunit is found at the monomer-monomer interface and is required for correct PSII assembly and/or dimerization.</text>
</comment>
<comment type="subunit">
    <text evidence="1">PSII is composed of 1 copy each of membrane proteins PsbA, PsbB, PsbC, PsbD, PsbE, PsbF, PsbH, PsbI, PsbJ, PsbK, PsbL, PsbM, PsbT, PsbX, PsbY, PsbZ, Psb30/Ycf12, at least 3 peripheral proteins of the oxygen-evolving complex and a large number of cofactors. It forms dimeric complexes.</text>
</comment>
<comment type="subcellular location">
    <subcellularLocation>
        <location evidence="1">Plastid</location>
        <location evidence="1">Chloroplast thylakoid membrane</location>
        <topology evidence="1">Single-pass membrane protein</topology>
    </subcellularLocation>
</comment>
<comment type="similarity">
    <text evidence="1">Belongs to the PsbL family.</text>
</comment>
<sequence>MTQSNPNEQNVELNRTSLYWGLLLIFVLAVLFSNYFFN</sequence>
<dbReference type="EMBL" id="AY007481">
    <property type="protein sequence ID" value="AAG27008.1"/>
    <property type="molecule type" value="Genomic_DNA"/>
</dbReference>
<dbReference type="SMR" id="Q7HIU5"/>
<dbReference type="GO" id="GO:0009535">
    <property type="term" value="C:chloroplast thylakoid membrane"/>
    <property type="evidence" value="ECO:0007669"/>
    <property type="project" value="UniProtKB-SubCell"/>
</dbReference>
<dbReference type="GO" id="GO:0009539">
    <property type="term" value="C:photosystem II reaction center"/>
    <property type="evidence" value="ECO:0007669"/>
    <property type="project" value="InterPro"/>
</dbReference>
<dbReference type="GO" id="GO:0015979">
    <property type="term" value="P:photosynthesis"/>
    <property type="evidence" value="ECO:0007669"/>
    <property type="project" value="UniProtKB-UniRule"/>
</dbReference>
<dbReference type="HAMAP" id="MF_01317">
    <property type="entry name" value="PSII_PsbL"/>
    <property type="match status" value="1"/>
</dbReference>
<dbReference type="InterPro" id="IPR003372">
    <property type="entry name" value="PSII_PsbL"/>
</dbReference>
<dbReference type="InterPro" id="IPR037266">
    <property type="entry name" value="PSII_PsbL_sf"/>
</dbReference>
<dbReference type="NCBIfam" id="NF001972">
    <property type="entry name" value="PRK00753.1"/>
    <property type="match status" value="1"/>
</dbReference>
<dbReference type="Pfam" id="PF02419">
    <property type="entry name" value="PsbL"/>
    <property type="match status" value="1"/>
</dbReference>
<dbReference type="SUPFAM" id="SSF161017">
    <property type="entry name" value="Photosystem II reaction center protein L, PsbL"/>
    <property type="match status" value="1"/>
</dbReference>